<protein>
    <recommendedName>
        <fullName evidence="1">5-methyltetrahydropteroyltriglutamate--homocysteine methyltransferase</fullName>
        <ecNumber evidence="1">2.1.1.14</ecNumber>
    </recommendedName>
    <alternativeName>
        <fullName evidence="1">Cobalamin-independent methionine synthase</fullName>
    </alternativeName>
    <alternativeName>
        <fullName evidence="1">Methionine synthase, vitamin-B12 independent isozyme</fullName>
    </alternativeName>
</protein>
<dbReference type="EC" id="2.1.1.14" evidence="1"/>
<dbReference type="EMBL" id="AL939107">
    <property type="protein sequence ID" value="CAC44335.1"/>
    <property type="molecule type" value="Genomic_DNA"/>
</dbReference>
<dbReference type="RefSeq" id="NP_625281.1">
    <property type="nucleotide sequence ID" value="NC_003888.3"/>
</dbReference>
<dbReference type="RefSeq" id="WP_011027494.1">
    <property type="nucleotide sequence ID" value="NZ_VNID01000004.1"/>
</dbReference>
<dbReference type="SMR" id="Q93J59"/>
<dbReference type="FunCoup" id="Q93J59">
    <property type="interactions" value="251"/>
</dbReference>
<dbReference type="STRING" id="100226.gene:17758568"/>
<dbReference type="PaxDb" id="100226-SCO0985"/>
<dbReference type="KEGG" id="sco:SCO0985"/>
<dbReference type="PATRIC" id="fig|100226.15.peg.983"/>
<dbReference type="eggNOG" id="COG0620">
    <property type="taxonomic scope" value="Bacteria"/>
</dbReference>
<dbReference type="HOGENOM" id="CLU_013175_0_0_11"/>
<dbReference type="InParanoid" id="Q93J59"/>
<dbReference type="OrthoDB" id="244285at2"/>
<dbReference type="PhylomeDB" id="Q93J59"/>
<dbReference type="UniPathway" id="UPA00051">
    <property type="reaction ID" value="UER00082"/>
</dbReference>
<dbReference type="Proteomes" id="UP000001973">
    <property type="component" value="Chromosome"/>
</dbReference>
<dbReference type="GO" id="GO:0003871">
    <property type="term" value="F:5-methyltetrahydropteroyltriglutamate-homocysteine S-methyltransferase activity"/>
    <property type="evidence" value="ECO:0007669"/>
    <property type="project" value="UniProtKB-UniRule"/>
</dbReference>
<dbReference type="GO" id="GO:0008270">
    <property type="term" value="F:zinc ion binding"/>
    <property type="evidence" value="ECO:0007669"/>
    <property type="project" value="InterPro"/>
</dbReference>
<dbReference type="GO" id="GO:0009086">
    <property type="term" value="P:methionine biosynthetic process"/>
    <property type="evidence" value="ECO:0007669"/>
    <property type="project" value="UniProtKB-UniRule"/>
</dbReference>
<dbReference type="GO" id="GO:0032259">
    <property type="term" value="P:methylation"/>
    <property type="evidence" value="ECO:0007669"/>
    <property type="project" value="UniProtKB-KW"/>
</dbReference>
<dbReference type="CDD" id="cd03311">
    <property type="entry name" value="CIMS_C_terminal_like"/>
    <property type="match status" value="1"/>
</dbReference>
<dbReference type="CDD" id="cd03312">
    <property type="entry name" value="CIMS_N_terminal_like"/>
    <property type="match status" value="1"/>
</dbReference>
<dbReference type="Gene3D" id="3.20.20.210">
    <property type="match status" value="2"/>
</dbReference>
<dbReference type="HAMAP" id="MF_00172">
    <property type="entry name" value="Meth_synth"/>
    <property type="match status" value="1"/>
</dbReference>
<dbReference type="InterPro" id="IPR013215">
    <property type="entry name" value="Cbl-indep_Met_Synth_N"/>
</dbReference>
<dbReference type="InterPro" id="IPR006276">
    <property type="entry name" value="Cobalamin-indep_Met_synthase"/>
</dbReference>
<dbReference type="InterPro" id="IPR002629">
    <property type="entry name" value="Met_Synth_C/arc"/>
</dbReference>
<dbReference type="InterPro" id="IPR038071">
    <property type="entry name" value="UROD/MetE-like_sf"/>
</dbReference>
<dbReference type="NCBIfam" id="TIGR01371">
    <property type="entry name" value="met_syn_B12ind"/>
    <property type="match status" value="1"/>
</dbReference>
<dbReference type="NCBIfam" id="NF003556">
    <property type="entry name" value="PRK05222.1"/>
    <property type="match status" value="1"/>
</dbReference>
<dbReference type="PANTHER" id="PTHR30519">
    <property type="entry name" value="5-METHYLTETRAHYDROPTEROYLTRIGLUTAMATE--HOMOCYSTEINE METHYLTRANSFERASE"/>
    <property type="match status" value="1"/>
</dbReference>
<dbReference type="Pfam" id="PF08267">
    <property type="entry name" value="Meth_synt_1"/>
    <property type="match status" value="1"/>
</dbReference>
<dbReference type="Pfam" id="PF01717">
    <property type="entry name" value="Meth_synt_2"/>
    <property type="match status" value="1"/>
</dbReference>
<dbReference type="PIRSF" id="PIRSF000382">
    <property type="entry name" value="MeTrfase_B12_ind"/>
    <property type="match status" value="1"/>
</dbReference>
<dbReference type="SUPFAM" id="SSF51726">
    <property type="entry name" value="UROD/MetE-like"/>
    <property type="match status" value="2"/>
</dbReference>
<sequence length="772" mass="83666">MTAKSAAAAARATVYGYPRQGPNRELKKAIEGYWKGRVSAPELRSLAADLRAANWRRLADAGIDEVPAGDFSYYDHVLDTTVMVGAIPERHRAAVAADALDGYFAMARGTQEVAPLEMTKWFDTNYHYLVPELGPDTVFTADSTKQVTELAEAVALGLTARPVLVGPVTYLLLAKPAPGAPADFEPLTLLDRLLPVYAEVLTDLRAAGAEWVQLDEPAFVQDRTPAELNALERAYRELGALTDRPKLLVASYFDRLGDALPVLAKAPIEGLALDFTDAAATNLDALAAVGGLPGKRLVAGVVNGRNIWINDLQKSLSTLGTLLGLADRVDVSASCSLLHVPLDTGAERDIEPQILRWLAFARQKTAEIVTLAKGLAQGTDAITGELAASRADMASRAGSPITRNPAVRARAEAVTDDDARRSQPYAERTAAQRAHLGLPPLPTTTIGSFPQTGEIRAARADLRDGRIDIAGYEERIRAEIQEVISFQEKTGLDVLVHGEPERNDMVQYFAEQLTGYLATQHGWVQSYGTRYVRPPILAGDISRPEPMTVRWTTYAQSLTEKPVKGMLTGPVTMLAWSFVRDDQPLGDTARQVALALRDEVNDLEAAGTSVIQVDEPALRETLPLRAADHTAYLAWATEAFRLTTSGVRPDTQIHTHMCYAEFGDIVQAIDDLDADVISLEAARSHMQVAHELATHGYPREAGPGVYDIHSPRVPSAEEAAALLRTGLKAIPAERLWVNPDCGLKTRGWPETRASLENLVATARTLRGELSAS</sequence>
<reference key="1">
    <citation type="journal article" date="2002" name="Nature">
        <title>Complete genome sequence of the model actinomycete Streptomyces coelicolor A3(2).</title>
        <authorList>
            <person name="Bentley S.D."/>
            <person name="Chater K.F."/>
            <person name="Cerdeno-Tarraga A.-M."/>
            <person name="Challis G.L."/>
            <person name="Thomson N.R."/>
            <person name="James K.D."/>
            <person name="Harris D.E."/>
            <person name="Quail M.A."/>
            <person name="Kieser H."/>
            <person name="Harper D."/>
            <person name="Bateman A."/>
            <person name="Brown S."/>
            <person name="Chandra G."/>
            <person name="Chen C.W."/>
            <person name="Collins M."/>
            <person name="Cronin A."/>
            <person name="Fraser A."/>
            <person name="Goble A."/>
            <person name="Hidalgo J."/>
            <person name="Hornsby T."/>
            <person name="Howarth S."/>
            <person name="Huang C.-H."/>
            <person name="Kieser T."/>
            <person name="Larke L."/>
            <person name="Murphy L.D."/>
            <person name="Oliver K."/>
            <person name="O'Neil S."/>
            <person name="Rabbinowitsch E."/>
            <person name="Rajandream M.A."/>
            <person name="Rutherford K.M."/>
            <person name="Rutter S."/>
            <person name="Seeger K."/>
            <person name="Saunders D."/>
            <person name="Sharp S."/>
            <person name="Squares R."/>
            <person name="Squares S."/>
            <person name="Taylor K."/>
            <person name="Warren T."/>
            <person name="Wietzorrek A."/>
            <person name="Woodward J.R."/>
            <person name="Barrell B.G."/>
            <person name="Parkhill J."/>
            <person name="Hopwood D.A."/>
        </authorList>
    </citation>
    <scope>NUCLEOTIDE SEQUENCE [LARGE SCALE GENOMIC DNA]</scope>
    <source>
        <strain>ATCC BAA-471 / A3(2) / M145</strain>
    </source>
</reference>
<name>METE_STRCO</name>
<gene>
    <name evidence="1" type="primary">metE</name>
    <name type="ordered locus">SCO0985</name>
    <name type="ORF">SCBAC19F3.12</name>
</gene>
<keyword id="KW-0028">Amino-acid biosynthesis</keyword>
<keyword id="KW-0479">Metal-binding</keyword>
<keyword id="KW-0486">Methionine biosynthesis</keyword>
<keyword id="KW-0489">Methyltransferase</keyword>
<keyword id="KW-1185">Reference proteome</keyword>
<keyword id="KW-0677">Repeat</keyword>
<keyword id="KW-0808">Transferase</keyword>
<keyword id="KW-0862">Zinc</keyword>
<organism>
    <name type="scientific">Streptomyces coelicolor (strain ATCC BAA-471 / A3(2) / M145)</name>
    <dbReference type="NCBI Taxonomy" id="100226"/>
    <lineage>
        <taxon>Bacteria</taxon>
        <taxon>Bacillati</taxon>
        <taxon>Actinomycetota</taxon>
        <taxon>Actinomycetes</taxon>
        <taxon>Kitasatosporales</taxon>
        <taxon>Streptomycetaceae</taxon>
        <taxon>Streptomyces</taxon>
        <taxon>Streptomyces albidoflavus group</taxon>
    </lineage>
</organism>
<accession>Q93J59</accession>
<feature type="chain" id="PRO_0000098669" description="5-methyltetrahydropteroyltriglutamate--homocysteine methyltransferase">
    <location>
        <begin position="1"/>
        <end position="772"/>
    </location>
</feature>
<feature type="active site" description="Proton donor" evidence="1">
    <location>
        <position position="709"/>
    </location>
</feature>
<feature type="binding site" evidence="1">
    <location>
        <begin position="24"/>
        <end position="27"/>
    </location>
    <ligand>
        <name>5-methyltetrahydropteroyltri-L-glutamate</name>
        <dbReference type="ChEBI" id="CHEBI:58207"/>
    </ligand>
</feature>
<feature type="binding site" evidence="1">
    <location>
        <position position="120"/>
    </location>
    <ligand>
        <name>5-methyltetrahydropteroyltri-L-glutamate</name>
        <dbReference type="ChEBI" id="CHEBI:58207"/>
    </ligand>
</feature>
<feature type="binding site" evidence="1">
    <location>
        <begin position="446"/>
        <end position="448"/>
    </location>
    <ligand>
        <name>L-homocysteine</name>
        <dbReference type="ChEBI" id="CHEBI:58199"/>
    </ligand>
</feature>
<feature type="binding site" evidence="1">
    <location>
        <begin position="446"/>
        <end position="448"/>
    </location>
    <ligand>
        <name>L-methionine</name>
        <dbReference type="ChEBI" id="CHEBI:57844"/>
    </ligand>
</feature>
<feature type="binding site" evidence="1">
    <location>
        <position position="499"/>
    </location>
    <ligand>
        <name>L-homocysteine</name>
        <dbReference type="ChEBI" id="CHEBI:58199"/>
    </ligand>
</feature>
<feature type="binding site" evidence="1">
    <location>
        <position position="499"/>
    </location>
    <ligand>
        <name>L-methionine</name>
        <dbReference type="ChEBI" id="CHEBI:57844"/>
    </ligand>
</feature>
<feature type="binding site" evidence="1">
    <location>
        <position position="576"/>
    </location>
    <ligand>
        <name>5-methyltetrahydropteroyltri-L-glutamate</name>
        <dbReference type="ChEBI" id="CHEBI:58207"/>
    </ligand>
</feature>
<feature type="binding site" evidence="1">
    <location>
        <position position="614"/>
    </location>
    <ligand>
        <name>L-homocysteine</name>
        <dbReference type="ChEBI" id="CHEBI:58199"/>
    </ligand>
</feature>
<feature type="binding site" evidence="1">
    <location>
        <position position="614"/>
    </location>
    <ligand>
        <name>L-methionine</name>
        <dbReference type="ChEBI" id="CHEBI:57844"/>
    </ligand>
</feature>
<feature type="binding site" evidence="1">
    <location>
        <position position="620"/>
    </location>
    <ligand>
        <name>5-methyltetrahydropteroyltri-L-glutamate</name>
        <dbReference type="ChEBI" id="CHEBI:58207"/>
    </ligand>
</feature>
<feature type="binding site" evidence="1">
    <location>
        <position position="656"/>
    </location>
    <ligand>
        <name>Zn(2+)</name>
        <dbReference type="ChEBI" id="CHEBI:29105"/>
        <note>catalytic</note>
    </ligand>
</feature>
<feature type="binding site" evidence="1">
    <location>
        <position position="658"/>
    </location>
    <ligand>
        <name>Zn(2+)</name>
        <dbReference type="ChEBI" id="CHEBI:29105"/>
        <note>catalytic</note>
    </ligand>
</feature>
<feature type="binding site" evidence="1">
    <location>
        <position position="680"/>
    </location>
    <ligand>
        <name>Zn(2+)</name>
        <dbReference type="ChEBI" id="CHEBI:29105"/>
        <note>catalytic</note>
    </ligand>
</feature>
<feature type="binding site" evidence="1">
    <location>
        <position position="741"/>
    </location>
    <ligand>
        <name>Zn(2+)</name>
        <dbReference type="ChEBI" id="CHEBI:29105"/>
        <note>catalytic</note>
    </ligand>
</feature>
<evidence type="ECO:0000255" key="1">
    <source>
        <dbReference type="HAMAP-Rule" id="MF_00172"/>
    </source>
</evidence>
<comment type="function">
    <text evidence="1">Catalyzes the transfer of a methyl group from 5-methyltetrahydrofolate to homocysteine resulting in methionine formation.</text>
</comment>
<comment type="catalytic activity">
    <reaction evidence="1">
        <text>5-methyltetrahydropteroyltri-L-glutamate + L-homocysteine = tetrahydropteroyltri-L-glutamate + L-methionine</text>
        <dbReference type="Rhea" id="RHEA:21196"/>
        <dbReference type="ChEBI" id="CHEBI:57844"/>
        <dbReference type="ChEBI" id="CHEBI:58140"/>
        <dbReference type="ChEBI" id="CHEBI:58199"/>
        <dbReference type="ChEBI" id="CHEBI:58207"/>
        <dbReference type="EC" id="2.1.1.14"/>
    </reaction>
</comment>
<comment type="cofactor">
    <cofactor evidence="1">
        <name>Zn(2+)</name>
        <dbReference type="ChEBI" id="CHEBI:29105"/>
    </cofactor>
    <text evidence="1">Binds 1 zinc ion per subunit.</text>
</comment>
<comment type="pathway">
    <text evidence="1">Amino-acid biosynthesis; L-methionine biosynthesis via de novo pathway; L-methionine from L-homocysteine (MetE route): step 1/1.</text>
</comment>
<comment type="similarity">
    <text evidence="1">Belongs to the vitamin-B12 independent methionine synthase family.</text>
</comment>
<proteinExistence type="inferred from homology"/>